<sequence length="342" mass="38460">MKYLVLALCTYLCSQTGADENAAQGIPLEAQRLTGEPLVAYLRRSQNLFEVNSAPTPNFEQKIMDIKYKHQKLNLMVKEDPDPEVDIPPSYDPRDVWKNCTTFYIRDQANCGSCWAVSTAAAISDRICIASKAEKQVNISATDIMTCCRPQCGDGCEGGWPIEAWKYFIYDGVVSGGEYLTKDVCRPYPIHPCGHHGNDTYYGECRGTAPTPPCKRKCRPGVRKMYRIDKRYGKDAYIVKQSVKAIQSEILRNGPVVASFAVYEDFRHYKSGIYKHTAGELRGYHAVKMIGWGNENNTDFWLIANSWHNDWGEKGYFRIIRGTNDCGIEGTIAAGIVDTESL</sequence>
<name>CYSP1_HAECO</name>
<protein>
    <recommendedName>
        <fullName>Cathepsin B-like cysteine proteinase 1</fullName>
        <ecNumber>3.4.22.-</ecNumber>
    </recommendedName>
</protein>
<gene>
    <name type="primary">AC-1</name>
</gene>
<feature type="signal peptide" evidence="2">
    <location>
        <begin position="1"/>
        <end position="18"/>
    </location>
</feature>
<feature type="propeptide" id="PRO_0000026186" description="Activation peptide" evidence="2">
    <location>
        <begin position="19"/>
        <end position="86"/>
    </location>
</feature>
<feature type="chain" id="PRO_0000026187" description="Cathepsin B-like cysteine proteinase 1">
    <location>
        <begin position="87"/>
        <end position="342"/>
    </location>
</feature>
<feature type="active site" evidence="1">
    <location>
        <position position="114"/>
    </location>
</feature>
<feature type="active site" evidence="1">
    <location>
        <position position="285"/>
    </location>
</feature>
<feature type="active site" evidence="1">
    <location>
        <position position="305"/>
    </location>
</feature>
<feature type="glycosylation site" description="N-linked (GlcNAc...) asparagine" evidence="2">
    <location>
        <position position="99"/>
    </location>
</feature>
<feature type="glycosylation site" description="N-linked (GlcNAc...) asparagine" evidence="2">
    <location>
        <position position="138"/>
    </location>
</feature>
<feature type="glycosylation site" description="N-linked (GlcNAc...) asparagine" evidence="2">
    <location>
        <position position="198"/>
    </location>
</feature>
<feature type="glycosylation site" description="N-linked (GlcNAc...) asparagine" evidence="2">
    <location>
        <position position="296"/>
    </location>
</feature>
<feature type="disulfide bond" evidence="1">
    <location>
        <begin position="100"/>
        <end position="128"/>
    </location>
</feature>
<feature type="disulfide bond" evidence="1">
    <location>
        <begin position="111"/>
        <end position="156"/>
    </location>
</feature>
<feature type="disulfide bond" evidence="1">
    <location>
        <begin position="147"/>
        <end position="214"/>
    </location>
</feature>
<feature type="disulfide bond" evidence="1">
    <location>
        <begin position="148"/>
        <end position="152"/>
    </location>
</feature>
<feature type="disulfide bond" evidence="1">
    <location>
        <begin position="185"/>
        <end position="218"/>
    </location>
</feature>
<feature type="disulfide bond" evidence="1">
    <location>
        <begin position="193"/>
        <end position="205"/>
    </location>
</feature>
<comment type="function">
    <text>Expression of the protease correlates with blood-feeding and suggests a role for the protease in blood digestion.</text>
</comment>
<comment type="developmental stage">
    <text>At low level in the third and fourth-stage larvae, and abundant in adult worms.</text>
</comment>
<comment type="similarity">
    <text evidence="3 4 5">Belongs to the peptidase C1 family.</text>
</comment>
<dbReference type="EC" id="3.4.22.-"/>
<dbReference type="EMBL" id="M31112">
    <property type="protein sequence ID" value="AAA29175.1"/>
    <property type="molecule type" value="mRNA"/>
</dbReference>
<dbReference type="PIR" id="A45524">
    <property type="entry name" value="A45524"/>
</dbReference>
<dbReference type="SMR" id="P19092"/>
<dbReference type="MEROPS" id="C01.101"/>
<dbReference type="GlyCosmos" id="P19092">
    <property type="glycosylation" value="4 sites, No reported glycans"/>
</dbReference>
<dbReference type="Proteomes" id="UP000025227">
    <property type="component" value="Unplaced"/>
</dbReference>
<dbReference type="GO" id="GO:0008234">
    <property type="term" value="F:cysteine-type peptidase activity"/>
    <property type="evidence" value="ECO:0007669"/>
    <property type="project" value="UniProtKB-KW"/>
</dbReference>
<dbReference type="GO" id="GO:0006508">
    <property type="term" value="P:proteolysis"/>
    <property type="evidence" value="ECO:0007669"/>
    <property type="project" value="UniProtKB-KW"/>
</dbReference>
<dbReference type="CDD" id="cd02620">
    <property type="entry name" value="Peptidase_C1A_CathepsinB"/>
    <property type="match status" value="1"/>
</dbReference>
<dbReference type="FunFam" id="3.90.70.10:FF:000031">
    <property type="entry name" value="Cathepsin B"/>
    <property type="match status" value="1"/>
</dbReference>
<dbReference type="Gene3D" id="3.90.70.10">
    <property type="entry name" value="Cysteine proteinases"/>
    <property type="match status" value="1"/>
</dbReference>
<dbReference type="InterPro" id="IPR038765">
    <property type="entry name" value="Papain-like_cys_pep_sf"/>
</dbReference>
<dbReference type="InterPro" id="IPR025661">
    <property type="entry name" value="Pept_asp_AS"/>
</dbReference>
<dbReference type="InterPro" id="IPR000169">
    <property type="entry name" value="Pept_cys_AS"/>
</dbReference>
<dbReference type="InterPro" id="IPR025660">
    <property type="entry name" value="Pept_his_AS"/>
</dbReference>
<dbReference type="InterPro" id="IPR013128">
    <property type="entry name" value="Peptidase_C1A"/>
</dbReference>
<dbReference type="InterPro" id="IPR000668">
    <property type="entry name" value="Peptidase_C1A_C"/>
</dbReference>
<dbReference type="PANTHER" id="PTHR12411">
    <property type="entry name" value="CYSTEINE PROTEASE FAMILY C1-RELATED"/>
    <property type="match status" value="1"/>
</dbReference>
<dbReference type="Pfam" id="PF00112">
    <property type="entry name" value="Peptidase_C1"/>
    <property type="match status" value="1"/>
</dbReference>
<dbReference type="PRINTS" id="PR00705">
    <property type="entry name" value="PAPAIN"/>
</dbReference>
<dbReference type="SMART" id="SM00645">
    <property type="entry name" value="Pept_C1"/>
    <property type="match status" value="1"/>
</dbReference>
<dbReference type="SUPFAM" id="SSF54001">
    <property type="entry name" value="Cysteine proteinases"/>
    <property type="match status" value="1"/>
</dbReference>
<dbReference type="PROSITE" id="PS00640">
    <property type="entry name" value="THIOL_PROTEASE_ASN"/>
    <property type="match status" value="1"/>
</dbReference>
<dbReference type="PROSITE" id="PS00139">
    <property type="entry name" value="THIOL_PROTEASE_CYS"/>
    <property type="match status" value="1"/>
</dbReference>
<dbReference type="PROSITE" id="PS00639">
    <property type="entry name" value="THIOL_PROTEASE_HIS"/>
    <property type="match status" value="1"/>
</dbReference>
<accession>P19092</accession>
<reference key="1">
    <citation type="journal article" date="1990" name="Mol. Biochem. Parasitol.">
        <title>Molecular cloning and primary sequence of a cysteine protease expressed by Haemonchus contortus adult worms.</title>
        <authorList>
            <person name="Cox G.N."/>
            <person name="Pratt D."/>
            <person name="Hageman R."/>
            <person name="Boisvenue R.J."/>
        </authorList>
    </citation>
    <scope>NUCLEOTIDE SEQUENCE [MRNA]</scope>
    <source>
        <strain>Isolate BPL1</strain>
    </source>
</reference>
<keyword id="KW-1015">Disulfide bond</keyword>
<keyword id="KW-0325">Glycoprotein</keyword>
<keyword id="KW-0378">Hydrolase</keyword>
<keyword id="KW-0645">Protease</keyword>
<keyword id="KW-0732">Signal</keyword>
<keyword id="KW-0788">Thiol protease</keyword>
<keyword id="KW-0865">Zymogen</keyword>
<organism>
    <name type="scientific">Haemonchus contortus</name>
    <name type="common">Barber pole worm</name>
    <dbReference type="NCBI Taxonomy" id="6289"/>
    <lineage>
        <taxon>Eukaryota</taxon>
        <taxon>Metazoa</taxon>
        <taxon>Ecdysozoa</taxon>
        <taxon>Nematoda</taxon>
        <taxon>Chromadorea</taxon>
        <taxon>Rhabditida</taxon>
        <taxon>Rhabditina</taxon>
        <taxon>Rhabditomorpha</taxon>
        <taxon>Strongyloidea</taxon>
        <taxon>Trichostrongylidae</taxon>
        <taxon>Haemonchus</taxon>
    </lineage>
</organism>
<evidence type="ECO:0000250" key="1"/>
<evidence type="ECO:0000255" key="2"/>
<evidence type="ECO:0000255" key="3">
    <source>
        <dbReference type="PROSITE-ProRule" id="PRU10088"/>
    </source>
</evidence>
<evidence type="ECO:0000255" key="4">
    <source>
        <dbReference type="PROSITE-ProRule" id="PRU10089"/>
    </source>
</evidence>
<evidence type="ECO:0000255" key="5">
    <source>
        <dbReference type="PROSITE-ProRule" id="PRU10090"/>
    </source>
</evidence>
<proteinExistence type="evidence at transcript level"/>